<organism>
    <name type="scientific">Pelotomaculum thermopropionicum (strain DSM 13744 / JCM 10971 / SI)</name>
    <dbReference type="NCBI Taxonomy" id="370438"/>
    <lineage>
        <taxon>Bacteria</taxon>
        <taxon>Bacillati</taxon>
        <taxon>Bacillota</taxon>
        <taxon>Clostridia</taxon>
        <taxon>Eubacteriales</taxon>
        <taxon>Desulfotomaculaceae</taxon>
        <taxon>Pelotomaculum</taxon>
    </lineage>
</organism>
<name>Y1821_PELTS</name>
<accession>A5D180</accession>
<sequence>MLFLKEEKDGVLLKVRVQPRAARNQVAGLYEDALKIRLTAPPVDGEANEACRAFLADSLSLPPSKVEIVSGHASRTKVVKIAGVGAEKVRRAFGL</sequence>
<reference key="1">
    <citation type="journal article" date="2008" name="Genome Res.">
        <title>The genome of Pelotomaculum thermopropionicum reveals niche-associated evolution in anaerobic microbiota.</title>
        <authorList>
            <person name="Kosaka T."/>
            <person name="Kato S."/>
            <person name="Shimoyama T."/>
            <person name="Ishii S."/>
            <person name="Abe T."/>
            <person name="Watanabe K."/>
        </authorList>
    </citation>
    <scope>NUCLEOTIDE SEQUENCE [LARGE SCALE GENOMIC DNA]</scope>
    <source>
        <strain>DSM 13744 / JCM 10971 / SI</strain>
    </source>
</reference>
<feature type="chain" id="PRO_1000082644" description="UPF0235 protein PTH_1821">
    <location>
        <begin position="1"/>
        <end position="95"/>
    </location>
</feature>
<protein>
    <recommendedName>
        <fullName evidence="1">UPF0235 protein PTH_1821</fullName>
    </recommendedName>
</protein>
<gene>
    <name type="ordered locus">PTH_1821</name>
</gene>
<keyword id="KW-1185">Reference proteome</keyword>
<dbReference type="EMBL" id="AP009389">
    <property type="protein sequence ID" value="BAF60002.1"/>
    <property type="molecule type" value="Genomic_DNA"/>
</dbReference>
<dbReference type="SMR" id="A5D180"/>
<dbReference type="STRING" id="370438.PTH_1821"/>
<dbReference type="KEGG" id="pth:PTH_1821"/>
<dbReference type="eggNOG" id="COG1872">
    <property type="taxonomic scope" value="Bacteria"/>
</dbReference>
<dbReference type="HOGENOM" id="CLU_130694_6_0_9"/>
<dbReference type="Proteomes" id="UP000006556">
    <property type="component" value="Chromosome"/>
</dbReference>
<dbReference type="GO" id="GO:0005737">
    <property type="term" value="C:cytoplasm"/>
    <property type="evidence" value="ECO:0007669"/>
    <property type="project" value="TreeGrafter"/>
</dbReference>
<dbReference type="Gene3D" id="3.30.1200.10">
    <property type="entry name" value="YggU-like"/>
    <property type="match status" value="1"/>
</dbReference>
<dbReference type="HAMAP" id="MF_00634">
    <property type="entry name" value="UPF0235"/>
    <property type="match status" value="1"/>
</dbReference>
<dbReference type="InterPro" id="IPR003746">
    <property type="entry name" value="DUF167"/>
</dbReference>
<dbReference type="InterPro" id="IPR036591">
    <property type="entry name" value="YggU-like_sf"/>
</dbReference>
<dbReference type="NCBIfam" id="TIGR00251">
    <property type="entry name" value="DUF167 family protein"/>
    <property type="match status" value="1"/>
</dbReference>
<dbReference type="PANTHER" id="PTHR13420">
    <property type="entry name" value="UPF0235 PROTEIN C15ORF40"/>
    <property type="match status" value="1"/>
</dbReference>
<dbReference type="PANTHER" id="PTHR13420:SF7">
    <property type="entry name" value="UPF0235 PROTEIN C15ORF40"/>
    <property type="match status" value="1"/>
</dbReference>
<dbReference type="Pfam" id="PF02594">
    <property type="entry name" value="DUF167"/>
    <property type="match status" value="1"/>
</dbReference>
<dbReference type="SMART" id="SM01152">
    <property type="entry name" value="DUF167"/>
    <property type="match status" value="1"/>
</dbReference>
<dbReference type="SUPFAM" id="SSF69786">
    <property type="entry name" value="YggU-like"/>
    <property type="match status" value="1"/>
</dbReference>
<proteinExistence type="inferred from homology"/>
<evidence type="ECO:0000255" key="1">
    <source>
        <dbReference type="HAMAP-Rule" id="MF_00634"/>
    </source>
</evidence>
<comment type="similarity">
    <text evidence="1">Belongs to the UPF0235 family.</text>
</comment>